<dbReference type="EC" id="2.8.1.-"/>
<dbReference type="EMBL" id="AP008232">
    <property type="protein sequence ID" value="BAE74312.1"/>
    <property type="molecule type" value="Genomic_DNA"/>
</dbReference>
<dbReference type="RefSeq" id="WP_011410897.1">
    <property type="nucleotide sequence ID" value="NC_007712.1"/>
</dbReference>
<dbReference type="SMR" id="Q2NU63"/>
<dbReference type="STRING" id="343509.SG1037"/>
<dbReference type="KEGG" id="sgl:SG1037"/>
<dbReference type="eggNOG" id="COG2920">
    <property type="taxonomic scope" value="Bacteria"/>
</dbReference>
<dbReference type="HOGENOM" id="CLU_153199_1_0_6"/>
<dbReference type="OrthoDB" id="9786347at2"/>
<dbReference type="Proteomes" id="UP000001932">
    <property type="component" value="Chromosome"/>
</dbReference>
<dbReference type="GO" id="GO:0005737">
    <property type="term" value="C:cytoplasm"/>
    <property type="evidence" value="ECO:0007669"/>
    <property type="project" value="UniProtKB-SubCell"/>
</dbReference>
<dbReference type="GO" id="GO:0097163">
    <property type="term" value="F:sulfur carrier activity"/>
    <property type="evidence" value="ECO:0007669"/>
    <property type="project" value="TreeGrafter"/>
</dbReference>
<dbReference type="GO" id="GO:0016740">
    <property type="term" value="F:transferase activity"/>
    <property type="evidence" value="ECO:0007669"/>
    <property type="project" value="UniProtKB-KW"/>
</dbReference>
<dbReference type="GO" id="GO:0002143">
    <property type="term" value="P:tRNA wobble position uridine thiolation"/>
    <property type="evidence" value="ECO:0007669"/>
    <property type="project" value="TreeGrafter"/>
</dbReference>
<dbReference type="FunFam" id="1.10.10.370:FF:000001">
    <property type="entry name" value="Sulfurtransferase"/>
    <property type="match status" value="1"/>
</dbReference>
<dbReference type="Gene3D" id="3.30.1420.10">
    <property type="match status" value="1"/>
</dbReference>
<dbReference type="Gene3D" id="1.10.10.370">
    <property type="entry name" value="DsrC-like protein, C-terminal domain"/>
    <property type="match status" value="1"/>
</dbReference>
<dbReference type="InterPro" id="IPR042072">
    <property type="entry name" value="DsrC-like_C"/>
</dbReference>
<dbReference type="InterPro" id="IPR025526">
    <property type="entry name" value="DsrC-like_dom_sf"/>
</dbReference>
<dbReference type="InterPro" id="IPR043163">
    <property type="entry name" value="DsrC-like_N"/>
</dbReference>
<dbReference type="InterPro" id="IPR007453">
    <property type="entry name" value="DsrC/TusE"/>
</dbReference>
<dbReference type="NCBIfam" id="TIGR03342">
    <property type="entry name" value="dsrC_tusE_dsvC"/>
    <property type="match status" value="1"/>
</dbReference>
<dbReference type="PANTHER" id="PTHR37010">
    <property type="entry name" value="SULFURTRANSFERASE TUSE"/>
    <property type="match status" value="1"/>
</dbReference>
<dbReference type="PANTHER" id="PTHR37010:SF1">
    <property type="entry name" value="SULFURTRANSFERASE TUSE"/>
    <property type="match status" value="1"/>
</dbReference>
<dbReference type="Pfam" id="PF04358">
    <property type="entry name" value="DsrC"/>
    <property type="match status" value="1"/>
</dbReference>
<dbReference type="PIRSF" id="PIRSF006223">
    <property type="entry name" value="DsrC_TusE"/>
    <property type="match status" value="1"/>
</dbReference>
<dbReference type="SUPFAM" id="SSF69721">
    <property type="entry name" value="DsrC, the gamma subunit of dissimilatory sulfite reductase"/>
    <property type="match status" value="1"/>
</dbReference>
<evidence type="ECO:0000250" key="1"/>
<evidence type="ECO:0000305" key="2"/>
<name>TUSE_SODGM</name>
<comment type="function">
    <text evidence="1">Part of a sulfur-relay system required for 2-thiolation of 5-methylaminomethyl-2-thiouridine (mnm(5)s(2)U) at tRNA wobble positions. Could accept sulfur from TusD (By similarity).</text>
</comment>
<comment type="subunit">
    <text evidence="1">Interacts with the TusBCD complex. Interacts with MnmA (By similarity).</text>
</comment>
<comment type="subcellular location">
    <subcellularLocation>
        <location evidence="1">Cytoplasm</location>
    </subcellularLocation>
</comment>
<comment type="similarity">
    <text evidence="2">Belongs to the DsrC/TusE family.</text>
</comment>
<sequence>MEFNGTEISTDAQGYLTHLQDWSEALAGEIARREGITLSEAHWQVIHFVRAFYLQYNTSPAVRMLVKAMAQAYGEEKGNSRYLFRLFPEGPAKQATKIAGLPKPVKCL</sequence>
<gene>
    <name type="primary">tusE</name>
    <name type="ordered locus">SG1037</name>
</gene>
<accession>Q2NU63</accession>
<protein>
    <recommendedName>
        <fullName>Sulfurtransferase TusE</fullName>
        <ecNumber>2.8.1.-</ecNumber>
    </recommendedName>
    <alternativeName>
        <fullName>tRNA 2-thiouridine synthesizing protein E</fullName>
    </alternativeName>
</protein>
<reference key="1">
    <citation type="journal article" date="2006" name="Genome Res.">
        <title>Massive genome erosion and functional adaptations provide insights into the symbiotic lifestyle of Sodalis glossinidius in the tsetse host.</title>
        <authorList>
            <person name="Toh H."/>
            <person name="Weiss B.L."/>
            <person name="Perkin S.A.H."/>
            <person name="Yamashita A."/>
            <person name="Oshima K."/>
            <person name="Hattori M."/>
            <person name="Aksoy S."/>
        </authorList>
    </citation>
    <scope>NUCLEOTIDE SEQUENCE [LARGE SCALE GENOMIC DNA]</scope>
    <source>
        <strain>morsitans</strain>
    </source>
</reference>
<feature type="chain" id="PRO_0000234621" description="Sulfurtransferase TusE">
    <location>
        <begin position="1"/>
        <end position="108"/>
    </location>
</feature>
<feature type="active site" description="Cysteine persulfide intermediate" evidence="1">
    <location>
        <position position="107"/>
    </location>
</feature>
<proteinExistence type="inferred from homology"/>
<keyword id="KW-0963">Cytoplasm</keyword>
<keyword id="KW-0808">Transferase</keyword>
<keyword id="KW-0819">tRNA processing</keyword>
<organism>
    <name type="scientific">Sodalis glossinidius (strain morsitans)</name>
    <dbReference type="NCBI Taxonomy" id="343509"/>
    <lineage>
        <taxon>Bacteria</taxon>
        <taxon>Pseudomonadati</taxon>
        <taxon>Pseudomonadota</taxon>
        <taxon>Gammaproteobacteria</taxon>
        <taxon>Enterobacterales</taxon>
        <taxon>Bruguierivoracaceae</taxon>
        <taxon>Sodalis</taxon>
    </lineage>
</organism>